<evidence type="ECO:0000250" key="1">
    <source>
        <dbReference type="UniProtKB" id="Q71BG9"/>
    </source>
</evidence>
<evidence type="ECO:0000255" key="2"/>
<evidence type="ECO:0000269" key="3">
    <source>
    </source>
</evidence>
<evidence type="ECO:0000269" key="4">
    <source>
    </source>
</evidence>
<evidence type="ECO:0000303" key="5">
    <source ref="1"/>
</evidence>
<evidence type="ECO:0000303" key="6">
    <source ref="2"/>
</evidence>
<evidence type="ECO:0000303" key="7">
    <source ref="3"/>
</evidence>
<evidence type="ECO:0000305" key="8"/>
<evidence type="ECO:0000305" key="9">
    <source>
    </source>
</evidence>
<evidence type="ECO:0000305" key="10">
    <source>
    </source>
</evidence>
<name>TM2NV_SOLLC</name>
<keyword id="KW-0067">ATP-binding</keyword>
<keyword id="KW-1003">Cell membrane</keyword>
<keyword id="KW-0175">Coiled coil</keyword>
<keyword id="KW-0945">Host-virus interaction</keyword>
<keyword id="KW-0381">Hypersensitive response</keyword>
<keyword id="KW-0433">Leucine-rich repeat</keyword>
<keyword id="KW-0472">Membrane</keyword>
<keyword id="KW-0547">Nucleotide-binding</keyword>
<keyword id="KW-0611">Plant defense</keyword>
<keyword id="KW-1185">Reference proteome</keyword>
<keyword id="KW-0677">Repeat</keyword>
<sequence length="861" mass="98610">MAEILLTSVINKSVEIAGNLLIQEGKRLYWLKEDIDWLQREMRHIRSYVDNAKAKEAGGDSRVKNLLKDIQELAGDVEDLLDDFLPKIQQSNKFNYCLKRSSFADEFAMEIEKIKRRVVDIDRIRKTYNIIDTDNNNDDCVLLDRRRLFLHADETEIIGLDDDFNMLQAKLLNQDLHYGVVSIVGMPGLGKTTLAKKLYRLIRDQFECSGLVYVSQQPRASEILLDIAKQIGLTEQKMKENLEDNLRSLLKIKRYVFLLDDVWDVEIWDDLKLVLPECDSKVGSRIIITSRNSNVGRYIGGESSLHALQPLESEKSFELFTKKIFNFDDNNSWANASPDLVNIGRNIVGRCGGIPLAIVVTAGMLRARERTEHAWNRVLESMGHKVQDGCAKVLALSYNDLPIASRPCFLYFGLYPEDHEIRAFDLINMWIAEKFIVVNSGNRREAEDLAEDVLNDLVSRNLIQLAKRTYNGRISSCRIHDLLHSLCVDLAKESNFFHTAHDAFGDPGNVARLRRITFYSDNVMIEFFRSNPKLEKLRVLFCFAKDPSIFSHMAYFDFKLLHTLVVVMSQSFQAYVTIPSKFGNMTCLRYLRLEGNICGKLPNSIVKLTRLETIDIDRRSLIQPPSGVWESKHLRHLCYRDYGQACNSCFSISSFYPNIYSLHPNNLQTLMWIPDKFFEPRLLHRLINLRKLGILGVSNSTVKMLSIFSPVLKALEVLKLSFSSDPSEQIKLSSYPHIAKLHLNVNRTMALNSQSFPPNLIKLTLANFTVDRYILAVLKTFPKLRKLKMFICKYNEEKMALSGEANGYSFPQLEVLHIHSPNGLSEVTCTDDVSMPKLKKLLLTGFHCGISLSERLKKLSK</sequence>
<reference key="1">
    <citation type="submission" date="2004-09" db="EMBL/GenBank/DDBJ databases">
        <title>Expression and Virus-Specificity of Tm-2nv in Transgenic Tobacco and Tomato.</title>
        <authorList>
            <person name="Jiang G."/>
        </authorList>
    </citation>
    <scope>NUCLEOTIDE SEQUENCE [GENOMIC DNA]</scope>
    <source>
        <strain>cv. Yukang 2</strain>
    </source>
</reference>
<reference key="2">
    <citation type="submission" date="2004-09" db="EMBL/GenBank/DDBJ databases">
        <title>Tm-2nv, a virus-resistant gene, cloning and characteristics from BiBAC of a tomato cultivar (Yukang 2).</title>
        <authorList>
            <person name="Jiang G."/>
        </authorList>
    </citation>
    <scope>NUCLEOTIDE SEQUENCE [GENOMIC DNA]</scope>
    <source>
        <strain>cv. Yukang 2</strain>
    </source>
</reference>
<reference key="3">
    <citation type="submission" date="2010-03" db="EMBL/GenBank/DDBJ databases">
        <title>Analysis and confirmation of a special molecular marker for tomato resistance to ToMV virus.</title>
        <authorList>
            <person name="Zhou Y."/>
            <person name="Dai P."/>
            <person name="Li Y."/>
            <person name="Jiang G."/>
        </authorList>
    </citation>
    <scope>NUCLEOTIDE SEQUENCE [GENOMIC DNA] OF 1-17</scope>
    <source>
        <strain>cv. Yukang 2</strain>
    </source>
</reference>
<reference key="4">
    <citation type="journal article" date="1989" name="Plant Cell">
        <title>Mutations in the tobacco mosaic virus 30-kD protein gene overcome Tm-2 resistance in tomato.</title>
        <authorList>
            <person name="Meshi T."/>
            <person name="Motoyoshi F."/>
            <person name="Maeda T."/>
            <person name="Yoshiwoka S."/>
            <person name="Watanabe H."/>
            <person name="Okada Y."/>
        </authorList>
    </citation>
    <scope>FUNCTION</scope>
    <scope>SUBUNIT (MICROBIAL INFECTION)</scope>
    <source>
        <strain>cv. Craigella GCR236</strain>
    </source>
</reference>
<reference key="5">
    <citation type="journal article" date="1995" name="Theor. Appl. Genet.">
        <title>Identification of RAPD markers linked to the Tm-2 locus in tomato.</title>
        <authorList>
            <person name="Ohmori T."/>
            <person name="Murata M."/>
            <person name="Motoyoshi F."/>
        </authorList>
    </citation>
    <scope>GENE FAMILY</scope>
    <source>
        <strain>cv. Craigella GCR236</strain>
    </source>
</reference>
<reference key="6">
    <citation type="journal article" date="2018" name="Arch. Virol.">
        <title>Using genomic analysis to identify tomato Tm-2 resistance-breaking mutations and their underlying evolutionary path in a new and emerging tobamovirus.</title>
        <authorList>
            <person name="Maayan Y."/>
            <person name="Pandaranayaka E.P.J."/>
            <person name="Srivastava D.A."/>
            <person name="Lapidot M."/>
            <person name="Levin I."/>
            <person name="Dombrovsky A."/>
            <person name="Harel A."/>
        </authorList>
    </citation>
    <scope>FUNCTION</scope>
    <scope>SUBUNIT (MICROBIAL INFECTION)</scope>
</reference>
<protein>
    <recommendedName>
        <fullName evidence="5 6">ToMV resistant protein Tm-2 netted virescent</fullName>
        <shortName evidence="5 6">ToMV resistant protein Tm-2nv</shortName>
    </recommendedName>
</protein>
<organism>
    <name type="scientific">Solanum lycopersicum</name>
    <name type="common">Tomato</name>
    <name type="synonym">Lycopersicon esculentum</name>
    <dbReference type="NCBI Taxonomy" id="4081"/>
    <lineage>
        <taxon>Eukaryota</taxon>
        <taxon>Viridiplantae</taxon>
        <taxon>Streptophyta</taxon>
        <taxon>Embryophyta</taxon>
        <taxon>Tracheophyta</taxon>
        <taxon>Spermatophyta</taxon>
        <taxon>Magnoliopsida</taxon>
        <taxon>eudicotyledons</taxon>
        <taxon>Gunneridae</taxon>
        <taxon>Pentapetalae</taxon>
        <taxon>asterids</taxon>
        <taxon>lamiids</taxon>
        <taxon>Solanales</taxon>
        <taxon>Solanaceae</taxon>
        <taxon>Solanoideae</taxon>
        <taxon>Solaneae</taxon>
        <taxon>Solanum</taxon>
        <taxon>Solanum subgen. Lycopersicon</taxon>
    </lineage>
</organism>
<accession>Q5MLE9</accession>
<accession>Q5UB82</accession>
<gene>
    <name evidence="5 6 7" type="primary">Tm-2nv</name>
</gene>
<dbReference type="EMBL" id="AY742887">
    <property type="protein sequence ID" value="AAV87531.1"/>
    <property type="molecule type" value="Genomic_DNA"/>
</dbReference>
<dbReference type="EMBL" id="HM027885">
    <property type="protein sequence ID" value="AEA51264.1"/>
    <property type="molecule type" value="Genomic_DNA"/>
</dbReference>
<dbReference type="SMR" id="Q5MLE9"/>
<dbReference type="InParanoid" id="Q5MLE9"/>
<dbReference type="Proteomes" id="UP000004994">
    <property type="component" value="Unplaced"/>
</dbReference>
<dbReference type="ExpressionAtlas" id="Q5MLE9">
    <property type="expression patterns" value="baseline and differential"/>
</dbReference>
<dbReference type="GO" id="GO:0005886">
    <property type="term" value="C:plasma membrane"/>
    <property type="evidence" value="ECO:0000250"/>
    <property type="project" value="UniProtKB"/>
</dbReference>
<dbReference type="GO" id="GO:0043531">
    <property type="term" value="F:ADP binding"/>
    <property type="evidence" value="ECO:0007669"/>
    <property type="project" value="InterPro"/>
</dbReference>
<dbReference type="GO" id="GO:0005524">
    <property type="term" value="F:ATP binding"/>
    <property type="evidence" value="ECO:0007669"/>
    <property type="project" value="UniProtKB-KW"/>
</dbReference>
<dbReference type="GO" id="GO:0016887">
    <property type="term" value="F:ATP hydrolysis activity"/>
    <property type="evidence" value="ECO:0007669"/>
    <property type="project" value="InterPro"/>
</dbReference>
<dbReference type="GO" id="GO:0098542">
    <property type="term" value="P:defense response to other organism"/>
    <property type="evidence" value="ECO:0000318"/>
    <property type="project" value="GO_Central"/>
</dbReference>
<dbReference type="GO" id="GO:0051607">
    <property type="term" value="P:defense response to virus"/>
    <property type="evidence" value="ECO:0000314"/>
    <property type="project" value="UniProtKB"/>
</dbReference>
<dbReference type="GO" id="GO:0009626">
    <property type="term" value="P:plant-type hypersensitive response"/>
    <property type="evidence" value="ECO:0007669"/>
    <property type="project" value="UniProtKB-KW"/>
</dbReference>
<dbReference type="CDD" id="cd14798">
    <property type="entry name" value="RX-CC_like"/>
    <property type="match status" value="1"/>
</dbReference>
<dbReference type="FunFam" id="3.40.50.300:FF:001091">
    <property type="entry name" value="Probable disease resistance protein At1g61300"/>
    <property type="match status" value="1"/>
</dbReference>
<dbReference type="FunFam" id="1.10.10.10:FF:000322">
    <property type="entry name" value="Probable disease resistance protein At1g63360"/>
    <property type="match status" value="1"/>
</dbReference>
<dbReference type="Gene3D" id="1.20.5.4130">
    <property type="match status" value="1"/>
</dbReference>
<dbReference type="Gene3D" id="1.10.8.430">
    <property type="entry name" value="Helical domain of apoptotic protease-activating factors"/>
    <property type="match status" value="1"/>
</dbReference>
<dbReference type="Gene3D" id="3.40.50.300">
    <property type="entry name" value="P-loop containing nucleotide triphosphate hydrolases"/>
    <property type="match status" value="1"/>
</dbReference>
<dbReference type="Gene3D" id="3.80.10.10">
    <property type="entry name" value="Ribonuclease Inhibitor"/>
    <property type="match status" value="1"/>
</dbReference>
<dbReference type="Gene3D" id="1.10.10.10">
    <property type="entry name" value="Winged helix-like DNA-binding domain superfamily/Winged helix DNA-binding domain"/>
    <property type="match status" value="1"/>
</dbReference>
<dbReference type="InterPro" id="IPR003593">
    <property type="entry name" value="AAA+_ATPase"/>
</dbReference>
<dbReference type="InterPro" id="IPR042197">
    <property type="entry name" value="Apaf_helical"/>
</dbReference>
<dbReference type="InterPro" id="IPR044974">
    <property type="entry name" value="Disease_R_plants"/>
</dbReference>
<dbReference type="InterPro" id="IPR032675">
    <property type="entry name" value="LRR_dom_sf"/>
</dbReference>
<dbReference type="InterPro" id="IPR055414">
    <property type="entry name" value="LRR_R13L4/SHOC2-like"/>
</dbReference>
<dbReference type="InterPro" id="IPR002182">
    <property type="entry name" value="NB-ARC"/>
</dbReference>
<dbReference type="InterPro" id="IPR027417">
    <property type="entry name" value="P-loop_NTPase"/>
</dbReference>
<dbReference type="InterPro" id="IPR038005">
    <property type="entry name" value="RX-like_CC"/>
</dbReference>
<dbReference type="InterPro" id="IPR041118">
    <property type="entry name" value="Rx_N"/>
</dbReference>
<dbReference type="InterPro" id="IPR036388">
    <property type="entry name" value="WH-like_DNA-bd_sf"/>
</dbReference>
<dbReference type="PANTHER" id="PTHR23155">
    <property type="entry name" value="DISEASE RESISTANCE PROTEIN RP"/>
    <property type="match status" value="1"/>
</dbReference>
<dbReference type="PANTHER" id="PTHR23155:SF1238">
    <property type="entry name" value="TOMV SUSCEPTIBLE PROTEIN TM-2"/>
    <property type="match status" value="1"/>
</dbReference>
<dbReference type="Pfam" id="PF23598">
    <property type="entry name" value="LRR_14"/>
    <property type="match status" value="1"/>
</dbReference>
<dbReference type="Pfam" id="PF00931">
    <property type="entry name" value="NB-ARC"/>
    <property type="match status" value="1"/>
</dbReference>
<dbReference type="Pfam" id="PF18052">
    <property type="entry name" value="Rx_N"/>
    <property type="match status" value="1"/>
</dbReference>
<dbReference type="Pfam" id="PF23559">
    <property type="entry name" value="WH_DRP"/>
    <property type="match status" value="1"/>
</dbReference>
<dbReference type="PRINTS" id="PR00364">
    <property type="entry name" value="DISEASERSIST"/>
</dbReference>
<dbReference type="SMART" id="SM00382">
    <property type="entry name" value="AAA"/>
    <property type="match status" value="1"/>
</dbReference>
<dbReference type="SUPFAM" id="SSF52058">
    <property type="entry name" value="L domain-like"/>
    <property type="match status" value="1"/>
</dbReference>
<dbReference type="SUPFAM" id="SSF52540">
    <property type="entry name" value="P-loop containing nucleoside triphosphate hydrolases"/>
    <property type="match status" value="1"/>
</dbReference>
<feature type="chain" id="PRO_0000448717" description="ToMV resistant protein Tm-2 netted virescent">
    <location>
        <begin position="1"/>
        <end position="861"/>
    </location>
</feature>
<feature type="domain" description="NB-ARC" evidence="2">
    <location>
        <begin position="162"/>
        <end position="388"/>
    </location>
</feature>
<feature type="repeat" description="LRR 1" evidence="2">
    <location>
        <begin position="225"/>
        <end position="248"/>
    </location>
</feature>
<feature type="repeat" description="LRR 2" evidence="2">
    <location>
        <begin position="305"/>
        <end position="327"/>
    </location>
</feature>
<feature type="repeat" description="LRR 3" evidence="2">
    <location>
        <begin position="388"/>
        <end position="411"/>
    </location>
</feature>
<feature type="repeat" description="LRR 4" evidence="2">
    <location>
        <begin position="449"/>
        <end position="472"/>
    </location>
</feature>
<feature type="repeat" description="LRR 5" evidence="2">
    <location>
        <begin position="510"/>
        <end position="536"/>
    </location>
</feature>
<feature type="repeat" description="LRR 6" evidence="2">
    <location>
        <begin position="585"/>
        <end position="608"/>
    </location>
</feature>
<feature type="repeat" description="LRR 7" evidence="2">
    <location>
        <begin position="609"/>
        <end position="631"/>
    </location>
</feature>
<feature type="repeat" description="LRR 8" evidence="2">
    <location>
        <begin position="652"/>
        <end position="680"/>
    </location>
</feature>
<feature type="repeat" description="LRR 9" evidence="2">
    <location>
        <begin position="689"/>
        <end position="710"/>
    </location>
</feature>
<feature type="repeat" description="LRR 10" evidence="2">
    <location>
        <begin position="712"/>
        <end position="735"/>
    </location>
</feature>
<feature type="repeat" description="LRR 11" evidence="2">
    <location>
        <begin position="736"/>
        <end position="758"/>
    </location>
</feature>
<feature type="repeat" description="LRR 12" evidence="2">
    <location>
        <begin position="784"/>
        <end position="807"/>
    </location>
</feature>
<feature type="repeat" description="LRR 13" evidence="2">
    <location>
        <begin position="810"/>
        <end position="835"/>
    </location>
</feature>
<feature type="coiled-coil region" evidence="2">
    <location>
        <begin position="63"/>
        <end position="83"/>
    </location>
</feature>
<feature type="binding site" evidence="2">
    <location>
        <begin position="185"/>
        <end position="192"/>
    </location>
    <ligand>
        <name>ATP</name>
        <dbReference type="ChEBI" id="CHEBI:30616"/>
    </ligand>
</feature>
<proteinExistence type="evidence at protein level"/>
<comment type="function">
    <text evidence="1 3 4">Inhibitor of viral mouvements which confers resistance to some tobamoviruses including tomato mosaic virus (ToMV) (e.g. isolate L and W3) and tobacco mosaic virus (TMV), but not to resistance-breaking isolates (e.g. Ltbl) ToMV and tomato brown rugose fruit virus (ToBRFV) (PubMed:2535549, PubMed:29582165). Elicits a hypersensitive reaction in response to avirulent (Avr) movement proteins from resistance inducing tobamoviruses (e.g. ToMV and TMV) strains, thus leading to programmed cell death (By similarity).</text>
</comment>
<comment type="subunit">
    <text evidence="9 10">(Microbial infection) Interacts with tobamoviruses mouvement protein at the plasma membrane; this interaction triggers defense responses leading to programmed cell death.</text>
</comment>
<comment type="subunit">
    <text evidence="1">Binds to HSP90 proteins; this interaction seems required for defense responses toward tobamoviruses.</text>
</comment>
<comment type="subcellular location">
    <subcellularLocation>
        <location evidence="1">Cell membrane</location>
        <topology evidence="1">Peripheral membrane protein</topology>
        <orientation evidence="1">Cytoplasmic side</orientation>
    </subcellularLocation>
</comment>
<comment type="miscellaneous">
    <text evidence="3">The Tm-2, Tm-2(2) and Tm-2nv alleles present in the tomato mosaic virus (ToMV/TMV)-resistant tomato cv. Craigella isolates GCR236 (AC Q71BH0), cv. Craigella GCR267 (AC Q71BG9) and cv. Yukang 2 (AC Q5MLE9), respectively confers resistance to ToMV but not the tm-2 allele present in the ToMV-susceptible tomato cv. Craigella isolate GCR26 (AC Q71BH1).</text>
</comment>
<comment type="similarity">
    <text evidence="8">Belongs to the disease resistance NB-LRR family.</text>
</comment>